<name>RL23_FRAT1</name>
<keyword id="KW-0687">Ribonucleoprotein</keyword>
<keyword id="KW-0689">Ribosomal protein</keyword>
<keyword id="KW-0694">RNA-binding</keyword>
<keyword id="KW-0699">rRNA-binding</keyword>
<accession>Q14JB8</accession>
<sequence>MSSQEKLLKTVIRPHVSDKTYGLSDANSTIVFEVARFANKQDVKNAVEKLFEVKVESVNILNVKGKARRFGRVEGGTKAWKKAYVKLAEGHDINFVGAE</sequence>
<protein>
    <recommendedName>
        <fullName evidence="1">Large ribosomal subunit protein uL23</fullName>
    </recommendedName>
    <alternativeName>
        <fullName evidence="2">50S ribosomal protein L23</fullName>
    </alternativeName>
</protein>
<comment type="function">
    <text evidence="1">One of the early assembly proteins it binds 23S rRNA. One of the proteins that surrounds the polypeptide exit tunnel on the outside of the ribosome. Forms the main docking site for trigger factor binding to the ribosome.</text>
</comment>
<comment type="subunit">
    <text evidence="1">Part of the 50S ribosomal subunit. Contacts protein L29, and trigger factor when it is bound to the ribosome.</text>
</comment>
<comment type="similarity">
    <text evidence="1">Belongs to the universal ribosomal protein uL23 family.</text>
</comment>
<proteinExistence type="inferred from homology"/>
<dbReference type="EMBL" id="AM286280">
    <property type="protein sequence ID" value="CAL08343.1"/>
    <property type="molecule type" value="Genomic_DNA"/>
</dbReference>
<dbReference type="RefSeq" id="WP_003021599.1">
    <property type="nucleotide sequence ID" value="NC_008245.1"/>
</dbReference>
<dbReference type="SMR" id="Q14JB8"/>
<dbReference type="KEGG" id="ftf:FTF0327"/>
<dbReference type="HOGENOM" id="CLU_037562_3_1_6"/>
<dbReference type="GO" id="GO:1990904">
    <property type="term" value="C:ribonucleoprotein complex"/>
    <property type="evidence" value="ECO:0007669"/>
    <property type="project" value="UniProtKB-KW"/>
</dbReference>
<dbReference type="GO" id="GO:0005840">
    <property type="term" value="C:ribosome"/>
    <property type="evidence" value="ECO:0007669"/>
    <property type="project" value="UniProtKB-KW"/>
</dbReference>
<dbReference type="GO" id="GO:0019843">
    <property type="term" value="F:rRNA binding"/>
    <property type="evidence" value="ECO:0007669"/>
    <property type="project" value="UniProtKB-UniRule"/>
</dbReference>
<dbReference type="GO" id="GO:0003735">
    <property type="term" value="F:structural constituent of ribosome"/>
    <property type="evidence" value="ECO:0007669"/>
    <property type="project" value="InterPro"/>
</dbReference>
<dbReference type="GO" id="GO:0006412">
    <property type="term" value="P:translation"/>
    <property type="evidence" value="ECO:0007669"/>
    <property type="project" value="UniProtKB-UniRule"/>
</dbReference>
<dbReference type="FunFam" id="3.30.70.330:FF:000001">
    <property type="entry name" value="50S ribosomal protein L23"/>
    <property type="match status" value="1"/>
</dbReference>
<dbReference type="Gene3D" id="3.30.70.330">
    <property type="match status" value="1"/>
</dbReference>
<dbReference type="HAMAP" id="MF_01369_B">
    <property type="entry name" value="Ribosomal_uL23_B"/>
    <property type="match status" value="1"/>
</dbReference>
<dbReference type="InterPro" id="IPR012677">
    <property type="entry name" value="Nucleotide-bd_a/b_plait_sf"/>
</dbReference>
<dbReference type="InterPro" id="IPR013025">
    <property type="entry name" value="Ribosomal_uL23-like"/>
</dbReference>
<dbReference type="InterPro" id="IPR012678">
    <property type="entry name" value="Ribosomal_uL23/eL15/eS24_sf"/>
</dbReference>
<dbReference type="InterPro" id="IPR001014">
    <property type="entry name" value="Ribosomal_uL23_CS"/>
</dbReference>
<dbReference type="NCBIfam" id="NF004359">
    <property type="entry name" value="PRK05738.1-3"/>
    <property type="match status" value="1"/>
</dbReference>
<dbReference type="NCBIfam" id="NF004363">
    <property type="entry name" value="PRK05738.2-4"/>
    <property type="match status" value="1"/>
</dbReference>
<dbReference type="PANTHER" id="PTHR11620">
    <property type="entry name" value="60S RIBOSOMAL PROTEIN L23A"/>
    <property type="match status" value="1"/>
</dbReference>
<dbReference type="Pfam" id="PF00276">
    <property type="entry name" value="Ribosomal_L23"/>
    <property type="match status" value="1"/>
</dbReference>
<dbReference type="SUPFAM" id="SSF54189">
    <property type="entry name" value="Ribosomal proteins S24e, L23 and L15e"/>
    <property type="match status" value="1"/>
</dbReference>
<dbReference type="PROSITE" id="PS00050">
    <property type="entry name" value="RIBOSOMAL_L23"/>
    <property type="match status" value="1"/>
</dbReference>
<evidence type="ECO:0000255" key="1">
    <source>
        <dbReference type="HAMAP-Rule" id="MF_01369"/>
    </source>
</evidence>
<evidence type="ECO:0000305" key="2"/>
<reference key="1">
    <citation type="journal article" date="2007" name="PLoS ONE">
        <title>Genome sequencing shows that European isolates of Francisella tularensis subspecies tularensis are almost identical to US laboratory strain Schu S4.</title>
        <authorList>
            <person name="Chaudhuri R.R."/>
            <person name="Ren C.-P."/>
            <person name="Desmond L."/>
            <person name="Vincent G.A."/>
            <person name="Silman N.J."/>
            <person name="Brehm J.K."/>
            <person name="Elmore M.J."/>
            <person name="Hudson M.J."/>
            <person name="Forsman M."/>
            <person name="Isherwood K.E."/>
            <person name="Gurycova D."/>
            <person name="Minton N.P."/>
            <person name="Titball R.W."/>
            <person name="Pallen M.J."/>
            <person name="Vipond R."/>
        </authorList>
    </citation>
    <scope>NUCLEOTIDE SEQUENCE [LARGE SCALE GENOMIC DNA]</scope>
    <source>
        <strain>FSC 198</strain>
    </source>
</reference>
<feature type="chain" id="PRO_0000272749" description="Large ribosomal subunit protein uL23">
    <location>
        <begin position="1"/>
        <end position="99"/>
    </location>
</feature>
<organism>
    <name type="scientific">Francisella tularensis subsp. tularensis (strain FSC 198)</name>
    <dbReference type="NCBI Taxonomy" id="393115"/>
    <lineage>
        <taxon>Bacteria</taxon>
        <taxon>Pseudomonadati</taxon>
        <taxon>Pseudomonadota</taxon>
        <taxon>Gammaproteobacteria</taxon>
        <taxon>Thiotrichales</taxon>
        <taxon>Francisellaceae</taxon>
        <taxon>Francisella</taxon>
    </lineage>
</organism>
<gene>
    <name evidence="1" type="primary">rplW</name>
    <name type="ordered locus">FTF0327</name>
</gene>